<proteinExistence type="evidence at protein level"/>
<keyword id="KW-0175">Coiled coil</keyword>
<keyword id="KW-0963">Cytoplasm</keyword>
<keyword id="KW-0539">Nucleus</keyword>
<keyword id="KW-0597">Phosphoprotein</keyword>
<keyword id="KW-1185">Reference proteome</keyword>
<protein>
    <recommendedName>
        <fullName>Cu(2+) suppressing and bleomycin sensitive protein 1</fullName>
    </recommendedName>
</protein>
<dbReference type="EMBL" id="Z73615">
    <property type="protein sequence ID" value="CAA97990.1"/>
    <property type="molecule type" value="Genomic_DNA"/>
</dbReference>
<dbReference type="EMBL" id="Z73617">
    <property type="protein sequence ID" value="CAA97996.1"/>
    <property type="molecule type" value="Genomic_DNA"/>
</dbReference>
<dbReference type="EMBL" id="J02802">
    <property type="protein sequence ID" value="AAA66910.1"/>
    <property type="molecule type" value="Genomic_DNA"/>
</dbReference>
<dbReference type="EMBL" id="BK006949">
    <property type="protein sequence ID" value="DAA11175.1"/>
    <property type="molecule type" value="Genomic_DNA"/>
</dbReference>
<dbReference type="PIR" id="S65293">
    <property type="entry name" value="S65293"/>
</dbReference>
<dbReference type="RefSeq" id="NP_015063.1">
    <property type="nucleotide sequence ID" value="NM_001184074.1"/>
</dbReference>
<dbReference type="SMR" id="Q08977"/>
<dbReference type="BioGRID" id="35952">
    <property type="interactions" value="117"/>
</dbReference>
<dbReference type="DIP" id="DIP-2002N"/>
<dbReference type="FunCoup" id="Q08977">
    <property type="interactions" value="73"/>
</dbReference>
<dbReference type="IntAct" id="Q08977">
    <property type="interactions" value="4"/>
</dbReference>
<dbReference type="MINT" id="Q08977"/>
<dbReference type="STRING" id="4932.YPL260W"/>
<dbReference type="iPTMnet" id="Q08977"/>
<dbReference type="PaxDb" id="4932-YPL260W"/>
<dbReference type="PeptideAtlas" id="Q08977"/>
<dbReference type="EnsemblFungi" id="YPL260W_mRNA">
    <property type="protein sequence ID" value="YPL260W"/>
    <property type="gene ID" value="YPL260W"/>
</dbReference>
<dbReference type="GeneID" id="855867"/>
<dbReference type="KEGG" id="sce:YPL260W"/>
<dbReference type="AGR" id="SGD:S000006181"/>
<dbReference type="SGD" id="S000006181">
    <property type="gene designation" value="CUB1"/>
</dbReference>
<dbReference type="VEuPathDB" id="FungiDB:YPL260W"/>
<dbReference type="eggNOG" id="ENOG502QPV0">
    <property type="taxonomic scope" value="Eukaryota"/>
</dbReference>
<dbReference type="HOGENOM" id="CLU_026648_1_0_1"/>
<dbReference type="InParanoid" id="Q08977"/>
<dbReference type="OMA" id="KQDRTTY"/>
<dbReference type="OrthoDB" id="2011986at2759"/>
<dbReference type="BioCyc" id="YEAST:G3O-34145-MONOMER"/>
<dbReference type="BioGRID-ORCS" id="855867">
    <property type="hits" value="9 hits in 10 CRISPR screens"/>
</dbReference>
<dbReference type="PRO" id="PR:Q08977"/>
<dbReference type="Proteomes" id="UP000002311">
    <property type="component" value="Chromosome XVI"/>
</dbReference>
<dbReference type="RNAct" id="Q08977">
    <property type="molecule type" value="protein"/>
</dbReference>
<dbReference type="GO" id="GO:0005737">
    <property type="term" value="C:cytoplasm"/>
    <property type="evidence" value="ECO:0007005"/>
    <property type="project" value="SGD"/>
</dbReference>
<dbReference type="GO" id="GO:0005634">
    <property type="term" value="C:nucleus"/>
    <property type="evidence" value="ECO:0007005"/>
    <property type="project" value="SGD"/>
</dbReference>
<dbReference type="InterPro" id="IPR018810">
    <property type="entry name" value="UPF0662"/>
</dbReference>
<dbReference type="PANTHER" id="PTHR28086:SF1">
    <property type="entry name" value="CU(2+) SUPPRESSING AND BLEOMYCIN SENSITIVE PROTEIN 1"/>
    <property type="match status" value="1"/>
</dbReference>
<dbReference type="PANTHER" id="PTHR28086">
    <property type="entry name" value="UPF0662 PROTEIN YPL260W"/>
    <property type="match status" value="1"/>
</dbReference>
<dbReference type="Pfam" id="PF10303">
    <property type="entry name" value="DUF2408"/>
    <property type="match status" value="3"/>
</dbReference>
<evidence type="ECO:0000255" key="1"/>
<evidence type="ECO:0000256" key="2">
    <source>
        <dbReference type="SAM" id="MobiDB-lite"/>
    </source>
</evidence>
<evidence type="ECO:0000269" key="3">
    <source>
    </source>
</evidence>
<evidence type="ECO:0000269" key="4">
    <source>
    </source>
</evidence>
<evidence type="ECO:0000269" key="5">
    <source>
    </source>
</evidence>
<evidence type="ECO:0000269" key="6">
    <source ref="7"/>
</evidence>
<evidence type="ECO:0000305" key="7"/>
<sequence>MFASAGQQHPQIVPKEEESILNYLLEVRSSLAKLKQNRTQYLNSKDVQTTYQHVLTKVRELDDIRKNSHETPAKSAATLIHSTELHNRVDSVLDDVFQLLSLCFLTVGLKNSAPATYASLSTVESLLEHLNESNVFTHHDLSPIKERLEEISKIVEQKNSSPAYDEDGNDDRLREIDNERKKNKIEEDLLLRAKLKHCKDEYDILEGKLEEIDPSLSTVMEKLFRIRRGLLSLVASAKKTMSKSDINTNSLLQEQNDLQTNNESLTDDKHLVSQEYVHEKLSVLKNELSELESNRDDSGKFKSLESHQVAEKGQSVLNGLLDDCHDLVNDLSHQKNGGLTLDPYLQPIYEQLIDIKTTLENLMITRRWTLRETDLFSYQKKLNEIDNKRINGKFPTKSQDSKGQSILLYLLRRCYAIIYKLLESSEPVSEALQPIHNQLSTVRRCLLELKRMGGVNNERELYPYQMKLASLDNLRTEGIFYDSDGNIPEGQGILNALLAECFDILHELKVEAEEKAQNSTSSDGSDDDDNGESGIDSNSNDSEPESEYQQE</sequence>
<gene>
    <name type="primary">CUB1</name>
    <name type="ordered locus">YPL260W</name>
</gene>
<accession>Q08977</accession>
<accession>D6W3A9</accession>
<accession>Q05760</accession>
<accession>Q7LGU3</accession>
<comment type="function">
    <text evidence="6">Involved in bleomycin tolerance with links to DNA repair and/or proteasome function.</text>
</comment>
<comment type="subunit">
    <text evidence="6">Monomer.</text>
</comment>
<comment type="subcellular location">
    <subcellularLocation>
        <location evidence="3">Cytoplasm</location>
    </subcellularLocation>
    <subcellularLocation>
        <location evidence="3">Nucleus</location>
    </subcellularLocation>
</comment>
<comment type="induction">
    <text evidence="5">Expression is induced in response to DNA replication stress.</text>
</comment>
<comment type="PTM">
    <text evidence="4">Phosphorylated by PKA in vitro.</text>
</comment>
<comment type="disruption phenotype">
    <text evidence="6">Leads to sensitivity to bleomycin (Ref.7). Bleomycin sensitivity is even increased when CUB1 deletion is combined with proteasome mutants including PRE9 or UMP1 disruptions (Ref.7). Suppresses the copper tolerance induced by the proteasome subunit PRE9 disruption (Ref.7). Leads to synthetic sickness with deletion of RAD6 on media containing bleomycin, but not hydroxyurea (HU) (Ref.7).</text>
</comment>
<comment type="similarity">
    <text evidence="7">Belongs to the CUB1 family.</text>
</comment>
<feature type="chain" id="PRO_0000255978" description="Cu(2+) suppressing and bleomycin sensitive protein 1">
    <location>
        <begin position="1"/>
        <end position="551"/>
    </location>
</feature>
<feature type="region of interest" description="Disordered" evidence="2">
    <location>
        <begin position="513"/>
        <end position="551"/>
    </location>
</feature>
<feature type="coiled-coil region" evidence="1">
    <location>
        <begin position="174"/>
        <end position="213"/>
    </location>
</feature>
<feature type="coiled-coil region" evidence="1">
    <location>
        <begin position="249"/>
        <end position="300"/>
    </location>
</feature>
<feature type="compositionally biased region" description="Low complexity" evidence="2">
    <location>
        <begin position="532"/>
        <end position="541"/>
    </location>
</feature>
<feature type="compositionally biased region" description="Acidic residues" evidence="2">
    <location>
        <begin position="542"/>
        <end position="551"/>
    </location>
</feature>
<feature type="sequence conflict" description="In Ref. 3; AAA66910." evidence="7" ref="3">
    <original>D</original>
    <variation>G</variation>
    <location>
        <position position="90"/>
    </location>
</feature>
<feature type="sequence conflict" description="In Ref. 3; AAA66910." evidence="7" ref="3">
    <original>E</original>
    <variation>K</variation>
    <location>
        <position position="128"/>
    </location>
</feature>
<reference key="1">
    <citation type="journal article" date="1997" name="Nature">
        <title>The nucleotide sequence of Saccharomyces cerevisiae chromosome XVI.</title>
        <authorList>
            <person name="Bussey H."/>
            <person name="Storms R.K."/>
            <person name="Ahmed A."/>
            <person name="Albermann K."/>
            <person name="Allen E."/>
            <person name="Ansorge W."/>
            <person name="Araujo R."/>
            <person name="Aparicio A."/>
            <person name="Barrell B.G."/>
            <person name="Badcock K."/>
            <person name="Benes V."/>
            <person name="Botstein D."/>
            <person name="Bowman S."/>
            <person name="Brueckner M."/>
            <person name="Carpenter J."/>
            <person name="Cherry J.M."/>
            <person name="Chung E."/>
            <person name="Churcher C.M."/>
            <person name="Coster F."/>
            <person name="Davis K."/>
            <person name="Davis R.W."/>
            <person name="Dietrich F.S."/>
            <person name="Delius H."/>
            <person name="DiPaolo T."/>
            <person name="Dubois E."/>
            <person name="Duesterhoeft A."/>
            <person name="Duncan M."/>
            <person name="Floeth M."/>
            <person name="Fortin N."/>
            <person name="Friesen J.D."/>
            <person name="Fritz C."/>
            <person name="Goffeau A."/>
            <person name="Hall J."/>
            <person name="Hebling U."/>
            <person name="Heumann K."/>
            <person name="Hilbert H."/>
            <person name="Hillier L.W."/>
            <person name="Hunicke-Smith S."/>
            <person name="Hyman R.W."/>
            <person name="Johnston M."/>
            <person name="Kalman S."/>
            <person name="Kleine K."/>
            <person name="Komp C."/>
            <person name="Kurdi O."/>
            <person name="Lashkari D."/>
            <person name="Lew H."/>
            <person name="Lin A."/>
            <person name="Lin D."/>
            <person name="Louis E.J."/>
            <person name="Marathe R."/>
            <person name="Messenguy F."/>
            <person name="Mewes H.-W."/>
            <person name="Mirtipati S."/>
            <person name="Moestl D."/>
            <person name="Mueller-Auer S."/>
            <person name="Namath A."/>
            <person name="Nentwich U."/>
            <person name="Oefner P."/>
            <person name="Pearson D."/>
            <person name="Petel F.X."/>
            <person name="Pohl T.M."/>
            <person name="Purnelle B."/>
            <person name="Rajandream M.A."/>
            <person name="Rechmann S."/>
            <person name="Rieger M."/>
            <person name="Riles L."/>
            <person name="Roberts D."/>
            <person name="Schaefer M."/>
            <person name="Scharfe M."/>
            <person name="Scherens B."/>
            <person name="Schramm S."/>
            <person name="Schroeder M."/>
            <person name="Sdicu A.-M."/>
            <person name="Tettelin H."/>
            <person name="Urrestarazu L.A."/>
            <person name="Ushinsky S."/>
            <person name="Vierendeels F."/>
            <person name="Vissers S."/>
            <person name="Voss H."/>
            <person name="Walsh S.V."/>
            <person name="Wambutt R."/>
            <person name="Wang Y."/>
            <person name="Wedler E."/>
            <person name="Wedler H."/>
            <person name="Winnett E."/>
            <person name="Zhong W.-W."/>
            <person name="Zollner A."/>
            <person name="Vo D.H."/>
            <person name="Hani J."/>
        </authorList>
    </citation>
    <scope>NUCLEOTIDE SEQUENCE [LARGE SCALE GENOMIC DNA]</scope>
    <source>
        <strain>ATCC 204508 / S288c</strain>
    </source>
</reference>
<reference key="2">
    <citation type="journal article" date="2014" name="G3 (Bethesda)">
        <title>The reference genome sequence of Saccharomyces cerevisiae: Then and now.</title>
        <authorList>
            <person name="Engel S.R."/>
            <person name="Dietrich F.S."/>
            <person name="Fisk D.G."/>
            <person name="Binkley G."/>
            <person name="Balakrishnan R."/>
            <person name="Costanzo M.C."/>
            <person name="Dwight S.S."/>
            <person name="Hitz B.C."/>
            <person name="Karra K."/>
            <person name="Nash R.S."/>
            <person name="Weng S."/>
            <person name="Wong E.D."/>
            <person name="Lloyd P."/>
            <person name="Skrzypek M.S."/>
            <person name="Miyasato S.R."/>
            <person name="Simison M."/>
            <person name="Cherry J.M."/>
        </authorList>
    </citation>
    <scope>GENOME REANNOTATION</scope>
    <source>
        <strain>ATCC 204508 / S288c</strain>
    </source>
</reference>
<reference key="3">
    <citation type="journal article" date="1987" name="J. Biol. Chem.">
        <title>Mitochondrial and cytoplasmic fumarases in Saccharomyces cerevisiae are encoded by a single nuclear gene FUM1.</title>
        <authorList>
            <person name="Wu M."/>
            <person name="Tzagoloff A."/>
        </authorList>
    </citation>
    <scope>NUCLEOTIDE SEQUENCE [GENOMIC DNA] OF 1-156</scope>
</reference>
<reference key="4">
    <citation type="journal article" date="2003" name="Nature">
        <title>Global analysis of protein localization in budding yeast.</title>
        <authorList>
            <person name="Huh W.-K."/>
            <person name="Falvo J.V."/>
            <person name="Gerke L.C."/>
            <person name="Carroll A.S."/>
            <person name="Howson R.W."/>
            <person name="Weissman J.S."/>
            <person name="O'Shea E.K."/>
        </authorList>
    </citation>
    <scope>SUBCELLULAR LOCATION [LARGE SCALE ANALYSIS]</scope>
</reference>
<reference key="5">
    <citation type="journal article" date="2005" name="Proc. Natl. Acad. Sci. U.S.A.">
        <title>An evolutionary proteomics approach identifies substrates of the cAMP-dependent protein kinase.</title>
        <authorList>
            <person name="Budovskaya Y.V."/>
            <person name="Stephan J.S."/>
            <person name="Deminoff S.J."/>
            <person name="Herman P.K."/>
        </authorList>
    </citation>
    <scope>PHOSPHORYLATION</scope>
</reference>
<reference key="6">
    <citation type="journal article" date="2012" name="Nat. Cell Biol.">
        <title>Dissecting DNA damage response pathways by analysing protein localization and abundance changes during DNA replication stress.</title>
        <authorList>
            <person name="Tkach J.M."/>
            <person name="Yimit A."/>
            <person name="Lee A.Y."/>
            <person name="Riffle M."/>
            <person name="Costanzo M."/>
            <person name="Jaschob D."/>
            <person name="Hendry J.A."/>
            <person name="Ou J."/>
            <person name="Moffat J."/>
            <person name="Boone C."/>
            <person name="Davis T.N."/>
            <person name="Nislow C."/>
            <person name="Brown G.W."/>
        </authorList>
    </citation>
    <scope>INDUCTION</scope>
</reference>
<reference key="7">
    <citation type="journal article" date="2016" name="Plant Gene">
        <title>YPL260W, a high-copy suppressor of a copper-sensitive phenotype in yeast, is linked to DNA repair and proteasome function.</title>
        <authorList>
            <person name="Firestone K."/>
            <person name="Awonusi D."/>
            <person name="Panfair D."/>
            <person name="Roland D."/>
            <person name="Ramamurthy A."/>
            <person name="Kusmierczyk A.R."/>
        </authorList>
    </citation>
    <scope>FUNCTION</scope>
    <scope>DISRUPTION PHENOTYPE</scope>
    <scope>SUBUNIT</scope>
</reference>
<organism>
    <name type="scientific">Saccharomyces cerevisiae (strain ATCC 204508 / S288c)</name>
    <name type="common">Baker's yeast</name>
    <dbReference type="NCBI Taxonomy" id="559292"/>
    <lineage>
        <taxon>Eukaryota</taxon>
        <taxon>Fungi</taxon>
        <taxon>Dikarya</taxon>
        <taxon>Ascomycota</taxon>
        <taxon>Saccharomycotina</taxon>
        <taxon>Saccharomycetes</taxon>
        <taxon>Saccharomycetales</taxon>
        <taxon>Saccharomycetaceae</taxon>
        <taxon>Saccharomyces</taxon>
    </lineage>
</organism>
<name>CUB1_YEAST</name>